<gene>
    <name type="ordered locus">MJ1428</name>
</gene>
<dbReference type="EMBL" id="L77117">
    <property type="protein sequence ID" value="AAB99438.1"/>
    <property type="molecule type" value="Genomic_DNA"/>
</dbReference>
<dbReference type="PIR" id="C64478">
    <property type="entry name" value="C64478"/>
</dbReference>
<dbReference type="RefSeq" id="WP_010870946.1">
    <property type="nucleotide sequence ID" value="NC_000909.1"/>
</dbReference>
<dbReference type="SMR" id="Q58823"/>
<dbReference type="FunCoup" id="Q58823">
    <property type="interactions" value="81"/>
</dbReference>
<dbReference type="STRING" id="243232.MJ_1428"/>
<dbReference type="PaxDb" id="243232-MJ_1428"/>
<dbReference type="EnsemblBacteria" id="AAB99438">
    <property type="protein sequence ID" value="AAB99438"/>
    <property type="gene ID" value="MJ_1428"/>
</dbReference>
<dbReference type="GeneID" id="1452332"/>
<dbReference type="KEGG" id="mja:MJ_1428"/>
<dbReference type="eggNOG" id="arCOG03038">
    <property type="taxonomic scope" value="Archaea"/>
</dbReference>
<dbReference type="HOGENOM" id="CLU_481144_0_0_2"/>
<dbReference type="InParanoid" id="Q58823"/>
<dbReference type="OrthoDB" id="115601at2157"/>
<dbReference type="PhylomeDB" id="Q58823"/>
<dbReference type="Proteomes" id="UP000000805">
    <property type="component" value="Chromosome"/>
</dbReference>
<dbReference type="Gene3D" id="1.25.40.10">
    <property type="entry name" value="Tetratricopeptide repeat domain"/>
    <property type="match status" value="5"/>
</dbReference>
<dbReference type="InterPro" id="IPR011990">
    <property type="entry name" value="TPR-like_helical_dom_sf"/>
</dbReference>
<dbReference type="InterPro" id="IPR019734">
    <property type="entry name" value="TPR_rpt"/>
</dbReference>
<dbReference type="PANTHER" id="PTHR12558">
    <property type="entry name" value="CELL DIVISION CYCLE 16,23,27"/>
    <property type="match status" value="1"/>
</dbReference>
<dbReference type="PANTHER" id="PTHR12558:SF13">
    <property type="entry name" value="CELL DIVISION CYCLE PROTEIN 27 HOMOLOG"/>
    <property type="match status" value="1"/>
</dbReference>
<dbReference type="Pfam" id="PF00515">
    <property type="entry name" value="TPR_1"/>
    <property type="match status" value="1"/>
</dbReference>
<dbReference type="Pfam" id="PF13414">
    <property type="entry name" value="TPR_11"/>
    <property type="match status" value="1"/>
</dbReference>
<dbReference type="Pfam" id="PF13432">
    <property type="entry name" value="TPR_16"/>
    <property type="match status" value="2"/>
</dbReference>
<dbReference type="SMART" id="SM00028">
    <property type="entry name" value="TPR"/>
    <property type="match status" value="10"/>
</dbReference>
<dbReference type="SUPFAM" id="SSF48452">
    <property type="entry name" value="TPR-like"/>
    <property type="match status" value="2"/>
</dbReference>
<dbReference type="PROSITE" id="PS50005">
    <property type="entry name" value="TPR"/>
    <property type="match status" value="9"/>
</dbReference>
<dbReference type="PROSITE" id="PS50293">
    <property type="entry name" value="TPR_REGION"/>
    <property type="match status" value="1"/>
</dbReference>
<proteinExistence type="predicted"/>
<keyword id="KW-1185">Reference proteome</keyword>
<keyword id="KW-0677">Repeat</keyword>
<keyword id="KW-0802">TPR repeat</keyword>
<reference key="1">
    <citation type="journal article" date="1996" name="Science">
        <title>Complete genome sequence of the methanogenic archaeon, Methanococcus jannaschii.</title>
        <authorList>
            <person name="Bult C.J."/>
            <person name="White O."/>
            <person name="Olsen G.J."/>
            <person name="Zhou L."/>
            <person name="Fleischmann R.D."/>
            <person name="Sutton G.G."/>
            <person name="Blake J.A."/>
            <person name="FitzGerald L.M."/>
            <person name="Clayton R.A."/>
            <person name="Gocayne J.D."/>
            <person name="Kerlavage A.R."/>
            <person name="Dougherty B.A."/>
            <person name="Tomb J.-F."/>
            <person name="Adams M.D."/>
            <person name="Reich C.I."/>
            <person name="Overbeek R."/>
            <person name="Kirkness E.F."/>
            <person name="Weinstock K.G."/>
            <person name="Merrick J.M."/>
            <person name="Glodek A."/>
            <person name="Scott J.L."/>
            <person name="Geoghagen N.S.M."/>
            <person name="Weidman J.F."/>
            <person name="Fuhrmann J.L."/>
            <person name="Nguyen D."/>
            <person name="Utterback T.R."/>
            <person name="Kelley J.M."/>
            <person name="Peterson J.D."/>
            <person name="Sadow P.W."/>
            <person name="Hanna M.C."/>
            <person name="Cotton M.D."/>
            <person name="Roberts K.M."/>
            <person name="Hurst M.A."/>
            <person name="Kaine B.P."/>
            <person name="Borodovsky M."/>
            <person name="Klenk H.-P."/>
            <person name="Fraser C.M."/>
            <person name="Smith H.O."/>
            <person name="Woese C.R."/>
            <person name="Venter J.C."/>
        </authorList>
    </citation>
    <scope>NUCLEOTIDE SEQUENCE [LARGE SCALE GENOMIC DNA]</scope>
    <source>
        <strain>ATCC 43067 / DSM 2661 / JAL-1 / JCM 10045 / NBRC 100440</strain>
    </source>
</reference>
<accession>Q58823</accession>
<protein>
    <recommendedName>
        <fullName>TPR repeat-containing protein MJ1428</fullName>
    </recommendedName>
</protein>
<organism>
    <name type="scientific">Methanocaldococcus jannaschii (strain ATCC 43067 / DSM 2661 / JAL-1 / JCM 10045 / NBRC 100440)</name>
    <name type="common">Methanococcus jannaschii</name>
    <dbReference type="NCBI Taxonomy" id="243232"/>
    <lineage>
        <taxon>Archaea</taxon>
        <taxon>Methanobacteriati</taxon>
        <taxon>Methanobacteriota</taxon>
        <taxon>Methanomada group</taxon>
        <taxon>Methanococci</taxon>
        <taxon>Methanococcales</taxon>
        <taxon>Methanocaldococcaceae</taxon>
        <taxon>Methanocaldococcus</taxon>
    </lineage>
</organism>
<sequence>MNLFRKISEKLKSYEDWVTEANYYLDEGIYDKAVECYLKALEKKNTNPIDWFNLAYALYHLEKYDSALEAINEALKISPSNIYFAYLKGLIHYKRGEIILAYKYLKKASEKIKNEELFEILGDISVKYGRYEEALKYYLKSYKMANSKNLNALFKAGKIYLLFGDIDKAYDAFNEILQQNPSHECKKIVECMENVVNAINSYEDLNNGLTMIKNKDYIGALKIFNKVLQIDENSDISYYYKSVIAEIFEEYKKALEYIDKSISIFNRSLYYAKKGDILYKLGDEEGAIEAYNKAIKLNSQNPYAYFGLAILYYRKGELEKSSNFFDKVLETYLEELSEEDISALNLYSLIGKAETTGIPKYYHEAMKYVDNLINLENSSRWWYVKGYIYYKLGNYKDAYESFMNALRVNPKDISTLKSLAIVLEKSGKIDEAITTYTKILKIVNSLQFTCEIDNILEKLRSRKPTNLEIPSVLFDIPVMYHKPNITCFYASNLWKYMANNNPIGAYIYLSFIESYISLDEISQMVNDIKSKLSLEMYRYCELIDDYKSDESVLMQIKELLQKLGCML</sequence>
<feature type="chain" id="PRO_0000106461" description="TPR repeat-containing protein MJ1428">
    <location>
        <begin position="1"/>
        <end position="567"/>
    </location>
</feature>
<feature type="repeat" description="TPR 1">
    <location>
        <begin position="14"/>
        <end position="47"/>
    </location>
</feature>
<feature type="repeat" description="TPR 2">
    <location>
        <begin position="48"/>
        <end position="81"/>
    </location>
</feature>
<feature type="repeat" description="TPR 3">
    <location>
        <begin position="83"/>
        <end position="115"/>
    </location>
</feature>
<feature type="repeat" description="TPR 4">
    <location>
        <begin position="116"/>
        <end position="148"/>
    </location>
</feature>
<feature type="repeat" description="TPR 5">
    <location>
        <begin position="150"/>
        <end position="183"/>
    </location>
</feature>
<feature type="repeat" description="TPR 6">
    <location>
        <begin position="199"/>
        <end position="234"/>
    </location>
</feature>
<feature type="repeat" description="TPR 7">
    <location>
        <begin position="236"/>
        <end position="268"/>
    </location>
</feature>
<feature type="repeat" description="TPR 8">
    <location>
        <begin position="269"/>
        <end position="301"/>
    </location>
</feature>
<feature type="repeat" description="TPR 9">
    <location>
        <begin position="303"/>
        <end position="335"/>
    </location>
</feature>
<feature type="repeat" description="TPR 10">
    <location>
        <begin position="344"/>
        <end position="379"/>
    </location>
</feature>
<feature type="repeat" description="TPR 11">
    <location>
        <begin position="380"/>
        <end position="412"/>
    </location>
</feature>
<feature type="repeat" description="TPR 12">
    <location>
        <begin position="414"/>
        <end position="446"/>
    </location>
</feature>
<feature type="repeat" description="TPR 13">
    <location>
        <begin position="505"/>
        <end position="538"/>
    </location>
</feature>
<name>Y1428_METJA</name>